<gene>
    <name type="ordered locus">MJ1349</name>
</gene>
<dbReference type="EMBL" id="L77117">
    <property type="protein sequence ID" value="AAB99357.1"/>
    <property type="molecule type" value="Genomic_DNA"/>
</dbReference>
<dbReference type="PIR" id="D64468">
    <property type="entry name" value="D64468"/>
</dbReference>
<dbReference type="SMR" id="Q58744"/>
<dbReference type="FunCoup" id="Q58744">
    <property type="interactions" value="1"/>
</dbReference>
<dbReference type="STRING" id="243232.MJ_1349"/>
<dbReference type="PaxDb" id="243232-MJ_1349"/>
<dbReference type="EnsemblBacteria" id="AAB99357">
    <property type="protein sequence ID" value="AAB99357"/>
    <property type="gene ID" value="MJ_1349"/>
</dbReference>
<dbReference type="KEGG" id="mja:MJ_1349"/>
<dbReference type="eggNOG" id="arCOG02650">
    <property type="taxonomic scope" value="Archaea"/>
</dbReference>
<dbReference type="HOGENOM" id="CLU_037958_0_0_2"/>
<dbReference type="InParanoid" id="Q58744"/>
<dbReference type="PhylomeDB" id="Q58744"/>
<dbReference type="Proteomes" id="UP000000805">
    <property type="component" value="Chromosome"/>
</dbReference>
<dbReference type="GO" id="GO:0051536">
    <property type="term" value="F:iron-sulfur cluster binding"/>
    <property type="evidence" value="ECO:0007669"/>
    <property type="project" value="UniProtKB-KW"/>
</dbReference>
<dbReference type="GO" id="GO:0046872">
    <property type="term" value="F:metal ion binding"/>
    <property type="evidence" value="ECO:0007669"/>
    <property type="project" value="UniProtKB-KW"/>
</dbReference>
<dbReference type="GO" id="GO:0052592">
    <property type="term" value="F:oxidoreductase activity, acting on CH or CH2 groups, with an iron-sulfur protein as acceptor"/>
    <property type="evidence" value="ECO:0000318"/>
    <property type="project" value="GO_Central"/>
</dbReference>
<dbReference type="Gene3D" id="3.30.70.20">
    <property type="match status" value="1"/>
</dbReference>
<dbReference type="InterPro" id="IPR017896">
    <property type="entry name" value="4Fe4S_Fe-S-bd"/>
</dbReference>
<dbReference type="InterPro" id="IPR017900">
    <property type="entry name" value="4Fe4S_Fe_S_CS"/>
</dbReference>
<dbReference type="InterPro" id="IPR007516">
    <property type="entry name" value="Co_F420_Hydgase/DH_bsu_N"/>
</dbReference>
<dbReference type="InterPro" id="IPR045220">
    <property type="entry name" value="FRHB/FDHB/HCAR-like"/>
</dbReference>
<dbReference type="InterPro" id="IPR007525">
    <property type="entry name" value="FrhB_FdhB_C"/>
</dbReference>
<dbReference type="PANTHER" id="PTHR31332">
    <property type="entry name" value="7-HYDROXYMETHYL CHLOROPHYLL A REDUCTASE, CHLOROPLASTIC"/>
    <property type="match status" value="1"/>
</dbReference>
<dbReference type="PANTHER" id="PTHR31332:SF0">
    <property type="entry name" value="7-HYDROXYMETHYL CHLOROPHYLL A REDUCTASE, CHLOROPLASTIC"/>
    <property type="match status" value="1"/>
</dbReference>
<dbReference type="Pfam" id="PF00037">
    <property type="entry name" value="Fer4"/>
    <property type="match status" value="1"/>
</dbReference>
<dbReference type="Pfam" id="PF04432">
    <property type="entry name" value="FrhB_FdhB_C"/>
    <property type="match status" value="1"/>
</dbReference>
<dbReference type="Pfam" id="PF04422">
    <property type="entry name" value="FrhB_FdhB_N"/>
    <property type="match status" value="1"/>
</dbReference>
<dbReference type="SUPFAM" id="SSF54862">
    <property type="entry name" value="4Fe-4S ferredoxins"/>
    <property type="match status" value="1"/>
</dbReference>
<dbReference type="PROSITE" id="PS00198">
    <property type="entry name" value="4FE4S_FER_1"/>
    <property type="match status" value="1"/>
</dbReference>
<dbReference type="PROSITE" id="PS51379">
    <property type="entry name" value="4FE4S_FER_2"/>
    <property type="match status" value="1"/>
</dbReference>
<feature type="chain" id="PRO_0000159228" description="Uncharacterized protein MJ1349">
    <location>
        <begin position="1"/>
        <end position="360"/>
    </location>
</feature>
<feature type="domain" description="4Fe-4S ferredoxin-type" evidence="1">
    <location>
        <begin position="11"/>
        <end position="40"/>
    </location>
</feature>
<reference key="1">
    <citation type="journal article" date="1996" name="Science">
        <title>Complete genome sequence of the methanogenic archaeon, Methanococcus jannaschii.</title>
        <authorList>
            <person name="Bult C.J."/>
            <person name="White O."/>
            <person name="Olsen G.J."/>
            <person name="Zhou L."/>
            <person name="Fleischmann R.D."/>
            <person name="Sutton G.G."/>
            <person name="Blake J.A."/>
            <person name="FitzGerald L.M."/>
            <person name="Clayton R.A."/>
            <person name="Gocayne J.D."/>
            <person name="Kerlavage A.R."/>
            <person name="Dougherty B.A."/>
            <person name="Tomb J.-F."/>
            <person name="Adams M.D."/>
            <person name="Reich C.I."/>
            <person name="Overbeek R."/>
            <person name="Kirkness E.F."/>
            <person name="Weinstock K.G."/>
            <person name="Merrick J.M."/>
            <person name="Glodek A."/>
            <person name="Scott J.L."/>
            <person name="Geoghagen N.S.M."/>
            <person name="Weidman J.F."/>
            <person name="Fuhrmann J.L."/>
            <person name="Nguyen D."/>
            <person name="Utterback T.R."/>
            <person name="Kelley J.M."/>
            <person name="Peterson J.D."/>
            <person name="Sadow P.W."/>
            <person name="Hanna M.C."/>
            <person name="Cotton M.D."/>
            <person name="Roberts K.M."/>
            <person name="Hurst M.A."/>
            <person name="Kaine B.P."/>
            <person name="Borodovsky M."/>
            <person name="Klenk H.-P."/>
            <person name="Fraser C.M."/>
            <person name="Smith H.O."/>
            <person name="Woese C.R."/>
            <person name="Venter J.C."/>
        </authorList>
    </citation>
    <scope>NUCLEOTIDE SEQUENCE [LARGE SCALE GENOMIC DNA]</scope>
    <source>
        <strain>ATCC 43067 / DSM 2661 / JAL-1 / JCM 10045 / NBRC 100440</strain>
    </source>
</reference>
<organism>
    <name type="scientific">Methanocaldococcus jannaschii (strain ATCC 43067 / DSM 2661 / JAL-1 / JCM 10045 / NBRC 100440)</name>
    <name type="common">Methanococcus jannaschii</name>
    <dbReference type="NCBI Taxonomy" id="243232"/>
    <lineage>
        <taxon>Archaea</taxon>
        <taxon>Methanobacteriati</taxon>
        <taxon>Methanobacteriota</taxon>
        <taxon>Methanomada group</taxon>
        <taxon>Methanococci</taxon>
        <taxon>Methanococcales</taxon>
        <taxon>Methanocaldococcaceae</taxon>
        <taxon>Methanocaldococcus</taxon>
    </lineage>
</organism>
<protein>
    <recommendedName>
        <fullName>Uncharacterized protein MJ1349</fullName>
    </recommendedName>
</protein>
<evidence type="ECO:0000255" key="1">
    <source>
        <dbReference type="PROSITE-ProRule" id="PRU00711"/>
    </source>
</evidence>
<evidence type="ECO:0000305" key="2"/>
<comment type="similarity">
    <text evidence="2">Belongs to the FrhB family.</text>
</comment>
<name>Y1349_METJA</name>
<sequence length="360" mass="40099">MRLMKSYKNLKEEVWDTNRCSGCGACVAVCPVNNLYFREESPVKFECDECSCIIVPADIVEHPISAEFCKTVVYDVPCGACYDACPRIKKSAIPKPKGLGNILKAVRAKASIEIKNAQNGGVVTAILANAFDEGLIDGAIVMMDDKWTLEPESYLALSKEDVLKSAGSKYLWKGPILKALKTAVMEKKLKKLAVVGTPCVINAIYQILSSDNDLLKPFREAIRLKIALFCFETYDYSKMIKKLNEDGIEPWEVKKMDIESGKLKITLINGNTVEYKLKDVESAMRNGCKVCGDFTGLTSDISVGNVGTEKGYSTVLIRNKWGEGFFKRAVYNGYITYDENVDLEAVEKLVELKKKRVKKD</sequence>
<proteinExistence type="inferred from homology"/>
<accession>Q58744</accession>
<keyword id="KW-0408">Iron</keyword>
<keyword id="KW-0411">Iron-sulfur</keyword>
<keyword id="KW-0479">Metal-binding</keyword>
<keyword id="KW-1185">Reference proteome</keyword>